<comment type="function">
    <text evidence="1">Heat shock protein that may play a role in the transport of polypeptides both across the mitochondrial membranes and into the endoplasmic reticulum.</text>
</comment>
<comment type="function">
    <text evidence="3 5 7 8 9 10 11 12 13">Acts as a highly immunodominant antigen (PubMed:15378761, PubMed:17051645, PubMed:8757872). Plays a role in the sensitivity to, and the import of candidacidal beta-defensin peptides (PubMed:16377704). HSP70/SSA1 and SSA2 bind histatin-5, a peptide from human saliva, and mediates its fungicidal activity (PubMed:12761219, PubMed:16720580, PubMed:17999963, PubMed:19006817, PubMed:9685398). SSA2 facilitates fungicidal activity of Hst 5 in binding and intracellular translocation, whereas HSP70/SSA1 appears to have a lesser functional role in Hst 5 toxicity (PubMed:16720580, PubMed:19006817).</text>
</comment>
<comment type="subunit">
    <text evidence="3 8 10 11 13">Binds human histatin-5, an antifungal peptide from saliva.</text>
</comment>
<comment type="subcellular location">
    <subcellularLocation>
        <location evidence="8 12">Cytoplasm</location>
    </subcellularLocation>
    <subcellularLocation>
        <location evidence="4 8 10 12">Secreted</location>
        <location evidence="4 8 10 12">Cell wall</location>
    </subcellularLocation>
</comment>
<comment type="induction">
    <text evidence="6">Expression is repressed by treatment with caspofungin.</text>
</comment>
<comment type="domain">
    <text evidence="11">The regions defined by residues 128 to 135, 150 to 156 and 333 to 337 correspond to Hst 5-binding epitopes.</text>
</comment>
<comment type="disruption phenotype">
    <text evidence="7 8 10">Does not affect cells growth and hyphal formation (PubMed:16720580). Leads to high resistance to the candidacidal activity of Hst 5 (PubMed:16377704, PubMed:16720580, PubMed:17999963).</text>
</comment>
<comment type="similarity">
    <text evidence="15">Belongs to the heat shock protein 70 family.</text>
</comment>
<gene>
    <name evidence="14" type="primary">SSA2</name>
    <name type="synonym">SSA1</name>
    <name type="ordered locus">CAALFM_C104300CA</name>
    <name type="ORF">CaO19.1065</name>
    <name type="ORF">CaO19.8667</name>
</gene>
<reference key="1">
    <citation type="journal article" date="2004" name="Proc. Natl. Acad. Sci. U.S.A.">
        <title>The diploid genome sequence of Candida albicans.</title>
        <authorList>
            <person name="Jones T."/>
            <person name="Federspiel N.A."/>
            <person name="Chibana H."/>
            <person name="Dungan J."/>
            <person name="Kalman S."/>
            <person name="Magee B.B."/>
            <person name="Newport G."/>
            <person name="Thorstenson Y.R."/>
            <person name="Agabian N."/>
            <person name="Magee P.T."/>
            <person name="Davis R.W."/>
            <person name="Scherer S."/>
        </authorList>
    </citation>
    <scope>NUCLEOTIDE SEQUENCE [LARGE SCALE GENOMIC DNA]</scope>
    <source>
        <strain>SC5314 / ATCC MYA-2876</strain>
    </source>
</reference>
<reference key="2">
    <citation type="journal article" date="2007" name="Genome Biol.">
        <title>Assembly of the Candida albicans genome into sixteen supercontigs aligned on the eight chromosomes.</title>
        <authorList>
            <person name="van het Hoog M."/>
            <person name="Rast T.J."/>
            <person name="Martchenko M."/>
            <person name="Grindle S."/>
            <person name="Dignard D."/>
            <person name="Hogues H."/>
            <person name="Cuomo C."/>
            <person name="Berriman M."/>
            <person name="Scherer S."/>
            <person name="Magee B.B."/>
            <person name="Whiteway M."/>
            <person name="Chibana H."/>
            <person name="Nantel A."/>
            <person name="Magee P.T."/>
        </authorList>
    </citation>
    <scope>GENOME REANNOTATION</scope>
    <source>
        <strain>SC5314 / ATCC MYA-2876</strain>
    </source>
</reference>
<reference key="3">
    <citation type="journal article" date="2013" name="Genome Biol.">
        <title>Assembly of a phased diploid Candida albicans genome facilitates allele-specific measurements and provides a simple model for repeat and indel structure.</title>
        <authorList>
            <person name="Muzzey D."/>
            <person name="Schwartz K."/>
            <person name="Weissman J.S."/>
            <person name="Sherlock G."/>
        </authorList>
    </citation>
    <scope>NUCLEOTIDE SEQUENCE [LARGE SCALE GENOMIC DNA]</scope>
    <scope>GENOME REANNOTATION</scope>
    <source>
        <strain>SC5314 / ATCC MYA-2876</strain>
    </source>
</reference>
<reference key="4">
    <citation type="journal article" date="1996" name="Infect. Immun.">
        <title>Evidence for presence in the cell wall of Candida albicans of a protein related to the hsp70 family.</title>
        <authorList>
            <person name="Lopez-Ribot J.L."/>
            <person name="Alloush H.M."/>
            <person name="Masten B.J."/>
            <person name="Chaffin W.L."/>
        </authorList>
    </citation>
    <scope>NUCLEOTIDE SEQUENCE [MRNA] OF 453-645</scope>
    <scope>SUBCELLULAR LOCATION</scope>
    <scope>FUNCTION AS AN ANTIGEN</scope>
    <source>
        <strain>3153A</strain>
    </source>
</reference>
<reference key="5">
    <citation type="journal article" date="1998" name="J. Biol. Chem.">
        <title>Candidacidal activity of salivary histatins. Identification of a histatin 5-binding protein on Candida albicans.</title>
        <authorList>
            <person name="Edgerton M."/>
            <person name="Koshlukova S.E."/>
            <person name="Lo T.E."/>
            <person name="Chrzan B.G."/>
            <person name="Straubinger R.M."/>
            <person name="Raj P.A."/>
        </authorList>
    </citation>
    <scope>FUNCTION</scope>
    <scope>INTERACTION WITH HUMAN ANTIFUNGAL PEPTIDE HTS 5</scope>
</reference>
<reference key="6">
    <citation type="journal article" date="2003" name="FEBS Lett.">
        <title>Identification of cell surface determinants in Candida albicans reveals Tsa1p, a protein differentially localized in the cell.</title>
        <authorList>
            <person name="Urban C."/>
            <person name="Sohn K."/>
            <person name="Lottspeich F."/>
            <person name="Brunner H."/>
            <person name="Rupp S."/>
        </authorList>
    </citation>
    <scope>SUBCELLULAR LOCATION</scope>
</reference>
<reference key="7">
    <citation type="journal article" date="2003" name="J. Biol. Chem.">
        <title>Candida albicans Ssa1/2p is the cell envelope binding protein for human salivary histatin 5.</title>
        <authorList>
            <person name="Li X.S."/>
            <person name="Reddy M.S."/>
            <person name="Baev D."/>
            <person name="Edgerton M."/>
        </authorList>
    </citation>
    <scope>FUNCTION</scope>
    <scope>INTERACTION WITH HUMAN ANTIFUNGAL PEPTIDE HTS 5</scope>
    <scope>IDENTIFICATION BY MASS SPECTROMETRY</scope>
</reference>
<reference key="8">
    <citation type="journal article" date="2004" name="Proteomics">
        <title>Proteomics-based identification of novel Candida albicans antigens for diagnosis of systemic candidiasis in patients with underlying hematological malignancies.</title>
        <authorList>
            <person name="Pitarch A."/>
            <person name="Abian J."/>
            <person name="Carrascal M."/>
            <person name="Sanchez M."/>
            <person name="Nombela C."/>
            <person name="Gil C."/>
        </authorList>
    </citation>
    <scope>FUNCTION AS AN ANTIGEN</scope>
</reference>
<reference key="9">
    <citation type="journal article" date="2005" name="Antimicrob. Agents Chemother.">
        <title>Genome-wide expression profiling of the response to azole, polyene, echinocandin, and pyrimidine antifungal agents in Candida albicans.</title>
        <authorList>
            <person name="Liu T.T."/>
            <person name="Lee R.E."/>
            <person name="Barker K.S."/>
            <person name="Lee R.E."/>
            <person name="Wei L."/>
            <person name="Homayouni R."/>
            <person name="Rogers P.D."/>
        </authorList>
    </citation>
    <scope>INDUCTION</scope>
</reference>
<reference key="10">
    <citation type="journal article" date="2006" name="Antimicrob. Agents Chemother.">
        <title>Distinct antifungal mechanisms: beta-defensins require Candida albicans Ssa1 protein, while Trk1p mediates activity of cysteine-free cationic peptides.</title>
        <authorList>
            <person name="Vylkova S."/>
            <person name="Li X.S."/>
            <person name="Berner J.C."/>
            <person name="Edgerton M."/>
        </authorList>
    </citation>
    <scope>FUNCTION</scope>
    <scope>DISRUPTION PHENOTYPE</scope>
</reference>
<reference key="11">
    <citation type="journal article" date="2006" name="J. Biol. Chem.">
        <title>Candida albicans cell wall ssa proteins bind and facilitate import of salivary histatin 5 required for toxicity.</title>
        <authorList>
            <person name="Li X.S."/>
            <person name="Sun J.N."/>
            <person name="Okamoto-Shibayama K."/>
            <person name="Edgerton M."/>
        </authorList>
    </citation>
    <scope>FUNCTION</scope>
    <scope>DISRUPTION PHENOTYPE</scope>
    <scope>INTERACTION WITH HUMAN ANTIFUNGAL PEPTIDE HTS 5</scope>
    <scope>SUBCELLULAR LOCATION</scope>
</reference>
<reference key="12">
    <citation type="journal article" date="2006" name="Proteomics">
        <title>A proteomic-based approach for the identification of Candida albicans protein components present in a subunit vaccine that protects against disseminated candidiasis.</title>
        <authorList>
            <person name="Thomas D.P."/>
            <person name="Viudes A."/>
            <person name="Monteagudo C."/>
            <person name="Lazzell A.L."/>
            <person name="Saville S.P."/>
            <person name="Lopez-Ribot J.L."/>
        </authorList>
    </citation>
    <scope>FUNCTION</scope>
</reference>
<reference key="13">
    <citation type="journal article" date="2008" name="Antimicrob. Agents Chemother.">
        <title>The P-113 fragment of histatin 5 requires a specific peptide sequence for intracellular translocation in Candida albicans, which is independent of cell wall binding.</title>
        <authorList>
            <person name="Jang W.S."/>
            <person name="Li X.S."/>
            <person name="Sun J.N."/>
            <person name="Edgerton M."/>
        </authorList>
    </citation>
    <scope>FUNCTION</scope>
    <scope>DISRUPTION PHENOTYPE</scope>
    <scope>INTERACTION WITH HUMAN ANTIFUNGAL PEPTIDE HTS 5</scope>
    <scope>SUBCELLULAR LOCATION</scope>
</reference>
<reference key="14">
    <citation type="journal article" date="2008" name="Mol. Microbiol.">
        <title>Uptake of the antifungal cationic peptide Histatin 5 by Candida albicans Ssa2p requires binding to non-conventional sites within the ATPase domain.</title>
        <authorList>
            <person name="Sun J.N."/>
            <person name="Li W."/>
            <person name="Jang W.S."/>
            <person name="Nayyar N."/>
            <person name="Sutton M.D."/>
            <person name="Edgerton M."/>
        </authorList>
    </citation>
    <scope>FUNCTION</scope>
    <scope>INTERACTION WITH HUMAN ANTIFUNGAL PEPTIDE HTS 5</scope>
    <scope>DOMAIN</scope>
    <scope>MUTAGENESIS OF 128-THR--PHE-132; 131-GLY--THR-135; 150-ASP--THR-156 AND 333-VAL--GLY-337</scope>
</reference>
<keyword id="KW-0007">Acetylation</keyword>
<keyword id="KW-0067">ATP-binding</keyword>
<keyword id="KW-0134">Cell wall</keyword>
<keyword id="KW-0963">Cytoplasm</keyword>
<keyword id="KW-0547">Nucleotide-binding</keyword>
<keyword id="KW-1185">Reference proteome</keyword>
<keyword id="KW-0964">Secreted</keyword>
<keyword id="KW-0346">Stress response</keyword>
<evidence type="ECO:0000250" key="1">
    <source>
        <dbReference type="UniProtKB" id="P10591"/>
    </source>
</evidence>
<evidence type="ECO:0000256" key="2">
    <source>
        <dbReference type="SAM" id="MobiDB-lite"/>
    </source>
</evidence>
<evidence type="ECO:0000269" key="3">
    <source>
    </source>
</evidence>
<evidence type="ECO:0000269" key="4">
    <source>
    </source>
</evidence>
<evidence type="ECO:0000269" key="5">
    <source>
    </source>
</evidence>
<evidence type="ECO:0000269" key="6">
    <source>
    </source>
</evidence>
<evidence type="ECO:0000269" key="7">
    <source>
    </source>
</evidence>
<evidence type="ECO:0000269" key="8">
    <source>
    </source>
</evidence>
<evidence type="ECO:0000269" key="9">
    <source>
    </source>
</evidence>
<evidence type="ECO:0000269" key="10">
    <source>
    </source>
</evidence>
<evidence type="ECO:0000269" key="11">
    <source>
    </source>
</evidence>
<evidence type="ECO:0000269" key="12">
    <source>
    </source>
</evidence>
<evidence type="ECO:0000269" key="13">
    <source>
    </source>
</evidence>
<evidence type="ECO:0000303" key="14">
    <source>
    </source>
</evidence>
<evidence type="ECO:0000305" key="15"/>
<name>HSP72_CANAL</name>
<organism>
    <name type="scientific">Candida albicans (strain SC5314 / ATCC MYA-2876)</name>
    <name type="common">Yeast</name>
    <dbReference type="NCBI Taxonomy" id="237561"/>
    <lineage>
        <taxon>Eukaryota</taxon>
        <taxon>Fungi</taxon>
        <taxon>Dikarya</taxon>
        <taxon>Ascomycota</taxon>
        <taxon>Saccharomycotina</taxon>
        <taxon>Pichiomycetes</taxon>
        <taxon>Debaryomycetaceae</taxon>
        <taxon>Candida/Lodderomyces clade</taxon>
        <taxon>Candida</taxon>
    </lineage>
</organism>
<feature type="initiator methionine" description="Removed" evidence="1">
    <location>
        <position position="1"/>
    </location>
</feature>
<feature type="chain" id="PRO_0000078365" description="Heat shock protein SSA2">
    <location>
        <begin position="2"/>
        <end position="645"/>
    </location>
</feature>
<feature type="region of interest" description="Disordered" evidence="2">
    <location>
        <begin position="581"/>
        <end position="645"/>
    </location>
</feature>
<feature type="compositionally biased region" description="Low complexity" evidence="2">
    <location>
        <begin position="611"/>
        <end position="621"/>
    </location>
</feature>
<feature type="modified residue" description="N-acetylserine" evidence="1">
    <location>
        <position position="2"/>
    </location>
</feature>
<feature type="mutagenesis site" description="Reduces Hst 5 uptake and cytotoxicity." evidence="11">
    <original>TAEGF</original>
    <variation>AAAGA</variation>
    <location>
        <begin position="128"/>
        <end position="132"/>
    </location>
</feature>
<feature type="mutagenesis site" description="Reduces Hst 5 uptake and cytotoxicity." evidence="11">
    <original>GFLGT</original>
    <variation>AFAGA</variation>
    <location>
        <begin position="131"/>
        <end position="135"/>
    </location>
</feature>
<feature type="mutagenesis site" description="Reduces Hst 5 uptake and cytotoxicity." evidence="11">
    <original>DSQRQAT</original>
    <variation>ASARAAA</variation>
    <location>
        <begin position="150"/>
        <end position="156"/>
    </location>
</feature>
<feature type="mutagenesis site" description="Reduces Hst 5 uptake and cytotoxicity." evidence="11">
    <original>VLVGG</original>
    <variation>ALAGA</variation>
    <location>
        <begin position="333"/>
        <end position="337"/>
    </location>
</feature>
<feature type="sequence conflict" description="In Ref. 4; AAC49388." evidence="15" ref="4">
    <original>SWLDA</original>
    <variation>AWLDS</variation>
    <location>
        <begin position="577"/>
        <end position="581"/>
    </location>
</feature>
<proteinExistence type="evidence at protein level"/>
<protein>
    <recommendedName>
        <fullName evidence="14">Heat shock protein SSA2</fullName>
    </recommendedName>
    <alternativeName>
        <fullName evidence="14">SSA subfamily protein 2</fullName>
    </alternativeName>
</protein>
<dbReference type="EMBL" id="CP017623">
    <property type="protein sequence ID" value="AOW26104.1"/>
    <property type="molecule type" value="Genomic_DNA"/>
</dbReference>
<dbReference type="EMBL" id="U25718">
    <property type="protein sequence ID" value="AAC49388.1"/>
    <property type="molecule type" value="mRNA"/>
</dbReference>
<dbReference type="RefSeq" id="XP_713669.2">
    <property type="nucleotide sequence ID" value="XM_708576.2"/>
</dbReference>
<dbReference type="SMR" id="P46587"/>
<dbReference type="BioGRID" id="1227747">
    <property type="interactions" value="8"/>
</dbReference>
<dbReference type="FunCoup" id="P46587">
    <property type="interactions" value="2119"/>
</dbReference>
<dbReference type="STRING" id="237561.P46587"/>
<dbReference type="ChEMBL" id="CHEMBL1255136"/>
<dbReference type="MoonProt" id="P46587"/>
<dbReference type="EnsemblFungi" id="C1_04300C_A-T">
    <property type="protein sequence ID" value="C1_04300C_A-T-p1"/>
    <property type="gene ID" value="C1_04300C_A"/>
</dbReference>
<dbReference type="GeneID" id="3644711"/>
<dbReference type="KEGG" id="cal:CAALFM_C104300CA"/>
<dbReference type="CGD" id="CAL0000184853">
    <property type="gene designation" value="SSA2"/>
</dbReference>
<dbReference type="VEuPathDB" id="FungiDB:C1_04300C_A"/>
<dbReference type="eggNOG" id="KOG0101">
    <property type="taxonomic scope" value="Eukaryota"/>
</dbReference>
<dbReference type="HOGENOM" id="CLU_005965_3_2_1"/>
<dbReference type="InParanoid" id="P46587"/>
<dbReference type="OrthoDB" id="2401965at2759"/>
<dbReference type="Reactome" id="R-HSA-6803157">
    <property type="pathway name" value="Antimicrobial peptides"/>
</dbReference>
<dbReference type="PRO" id="PR:P46587"/>
<dbReference type="Proteomes" id="UP000000559">
    <property type="component" value="Chromosome 1"/>
</dbReference>
<dbReference type="GO" id="GO:0009986">
    <property type="term" value="C:cell surface"/>
    <property type="evidence" value="ECO:0000314"/>
    <property type="project" value="CGD"/>
</dbReference>
<dbReference type="GO" id="GO:0005737">
    <property type="term" value="C:cytoplasm"/>
    <property type="evidence" value="ECO:0000318"/>
    <property type="project" value="GO_Central"/>
</dbReference>
<dbReference type="GO" id="GO:0005829">
    <property type="term" value="C:cytosol"/>
    <property type="evidence" value="ECO:0000318"/>
    <property type="project" value="GO_Central"/>
</dbReference>
<dbReference type="GO" id="GO:0005576">
    <property type="term" value="C:extracellular region"/>
    <property type="evidence" value="ECO:0007669"/>
    <property type="project" value="UniProtKB-KW"/>
</dbReference>
<dbReference type="GO" id="GO:0062040">
    <property type="term" value="C:fungal biofilm matrix"/>
    <property type="evidence" value="ECO:0000314"/>
    <property type="project" value="CGD"/>
</dbReference>
<dbReference type="GO" id="GO:0009277">
    <property type="term" value="C:fungal-type cell wall"/>
    <property type="evidence" value="ECO:0000314"/>
    <property type="project" value="CGD"/>
</dbReference>
<dbReference type="GO" id="GO:0030446">
    <property type="term" value="C:hyphal cell wall"/>
    <property type="evidence" value="ECO:0000314"/>
    <property type="project" value="CGD"/>
</dbReference>
<dbReference type="GO" id="GO:0016020">
    <property type="term" value="C:membrane"/>
    <property type="evidence" value="ECO:0000314"/>
    <property type="project" value="CGD"/>
</dbReference>
<dbReference type="GO" id="GO:0005634">
    <property type="term" value="C:nucleus"/>
    <property type="evidence" value="ECO:0000318"/>
    <property type="project" value="GO_Central"/>
</dbReference>
<dbReference type="GO" id="GO:0005886">
    <property type="term" value="C:plasma membrane"/>
    <property type="evidence" value="ECO:0000314"/>
    <property type="project" value="CGD"/>
</dbReference>
<dbReference type="GO" id="GO:0005524">
    <property type="term" value="F:ATP binding"/>
    <property type="evidence" value="ECO:0007669"/>
    <property type="project" value="UniProtKB-KW"/>
</dbReference>
<dbReference type="GO" id="GO:0016887">
    <property type="term" value="F:ATP hydrolysis activity"/>
    <property type="evidence" value="ECO:0000318"/>
    <property type="project" value="GO_Central"/>
</dbReference>
<dbReference type="GO" id="GO:0140662">
    <property type="term" value="F:ATP-dependent protein folding chaperone"/>
    <property type="evidence" value="ECO:0007669"/>
    <property type="project" value="InterPro"/>
</dbReference>
<dbReference type="GO" id="GO:0031072">
    <property type="term" value="F:heat shock protein binding"/>
    <property type="evidence" value="ECO:0000318"/>
    <property type="project" value="GO_Central"/>
</dbReference>
<dbReference type="GO" id="GO:0042277">
    <property type="term" value="F:peptide binding"/>
    <property type="evidence" value="ECO:0000314"/>
    <property type="project" value="CGD"/>
</dbReference>
<dbReference type="GO" id="GO:0044183">
    <property type="term" value="F:protein folding chaperone"/>
    <property type="evidence" value="ECO:0000318"/>
    <property type="project" value="GO_Central"/>
</dbReference>
<dbReference type="GO" id="GO:0051085">
    <property type="term" value="P:chaperone cofactor-dependent protein refolding"/>
    <property type="evidence" value="ECO:0000318"/>
    <property type="project" value="GO_Central"/>
</dbReference>
<dbReference type="GO" id="GO:0015833">
    <property type="term" value="P:peptide transport"/>
    <property type="evidence" value="ECO:0000315"/>
    <property type="project" value="CGD"/>
</dbReference>
<dbReference type="GO" id="GO:0042026">
    <property type="term" value="P:protein refolding"/>
    <property type="evidence" value="ECO:0000318"/>
    <property type="project" value="GO_Central"/>
</dbReference>
<dbReference type="GO" id="GO:0009636">
    <property type="term" value="P:response to toxic substance"/>
    <property type="evidence" value="ECO:0000315"/>
    <property type="project" value="CGD"/>
</dbReference>
<dbReference type="CDD" id="cd10233">
    <property type="entry name" value="ASKHA_NBD_HSP70_HSPA1"/>
    <property type="match status" value="1"/>
</dbReference>
<dbReference type="FunFam" id="2.60.34.10:FF:000002">
    <property type="entry name" value="Heat shock 70 kDa"/>
    <property type="match status" value="1"/>
</dbReference>
<dbReference type="FunFam" id="3.90.640.10:FF:000002">
    <property type="entry name" value="Heat shock 70 kDa"/>
    <property type="match status" value="1"/>
</dbReference>
<dbReference type="FunFam" id="3.30.420.40:FF:000172">
    <property type="entry name" value="Heat shock 70 kDa protein"/>
    <property type="match status" value="2"/>
</dbReference>
<dbReference type="FunFam" id="3.30.30.30:FF:000001">
    <property type="entry name" value="heat shock 70 kDa protein-like"/>
    <property type="match status" value="1"/>
</dbReference>
<dbReference type="FunFam" id="1.20.1270.10:FF:000016">
    <property type="entry name" value="Heat shock protein 70"/>
    <property type="match status" value="1"/>
</dbReference>
<dbReference type="FunFam" id="3.30.420.40:FF:000026">
    <property type="entry name" value="Heat shock protein 70"/>
    <property type="match status" value="1"/>
</dbReference>
<dbReference type="Gene3D" id="1.20.1270.10">
    <property type="match status" value="1"/>
</dbReference>
<dbReference type="Gene3D" id="3.30.30.30">
    <property type="match status" value="1"/>
</dbReference>
<dbReference type="Gene3D" id="3.30.420.40">
    <property type="match status" value="2"/>
</dbReference>
<dbReference type="Gene3D" id="3.90.640.10">
    <property type="entry name" value="Actin, Chain A, domain 4"/>
    <property type="match status" value="1"/>
</dbReference>
<dbReference type="Gene3D" id="2.60.34.10">
    <property type="entry name" value="Substrate Binding Domain Of DNAk, Chain A, domain 1"/>
    <property type="match status" value="1"/>
</dbReference>
<dbReference type="InterPro" id="IPR043129">
    <property type="entry name" value="ATPase_NBD"/>
</dbReference>
<dbReference type="InterPro" id="IPR018181">
    <property type="entry name" value="Heat_shock_70_CS"/>
</dbReference>
<dbReference type="InterPro" id="IPR029048">
    <property type="entry name" value="HSP70_C_sf"/>
</dbReference>
<dbReference type="InterPro" id="IPR029047">
    <property type="entry name" value="HSP70_peptide-bd_sf"/>
</dbReference>
<dbReference type="InterPro" id="IPR013126">
    <property type="entry name" value="Hsp_70_fam"/>
</dbReference>
<dbReference type="NCBIfam" id="NF001413">
    <property type="entry name" value="PRK00290.1"/>
    <property type="match status" value="1"/>
</dbReference>
<dbReference type="PANTHER" id="PTHR19375">
    <property type="entry name" value="HEAT SHOCK PROTEIN 70KDA"/>
    <property type="match status" value="1"/>
</dbReference>
<dbReference type="Pfam" id="PF00012">
    <property type="entry name" value="HSP70"/>
    <property type="match status" value="1"/>
</dbReference>
<dbReference type="PRINTS" id="PR00301">
    <property type="entry name" value="HEATSHOCK70"/>
</dbReference>
<dbReference type="SUPFAM" id="SSF53067">
    <property type="entry name" value="Actin-like ATPase domain"/>
    <property type="match status" value="2"/>
</dbReference>
<dbReference type="SUPFAM" id="SSF100934">
    <property type="entry name" value="Heat shock protein 70kD (HSP70), C-terminal subdomain"/>
    <property type="match status" value="1"/>
</dbReference>
<dbReference type="SUPFAM" id="SSF100920">
    <property type="entry name" value="Heat shock protein 70kD (HSP70), peptide-binding domain"/>
    <property type="match status" value="1"/>
</dbReference>
<dbReference type="PROSITE" id="PS00297">
    <property type="entry name" value="HSP70_1"/>
    <property type="match status" value="1"/>
</dbReference>
<dbReference type="PROSITE" id="PS00329">
    <property type="entry name" value="HSP70_2"/>
    <property type="match status" value="1"/>
</dbReference>
<dbReference type="PROSITE" id="PS01036">
    <property type="entry name" value="HSP70_3"/>
    <property type="match status" value="1"/>
</dbReference>
<sequence>MSKAVGIDLGTTYSCVAHFANDRVEIIANDQGNRTTPSFVAFTDTERLIGDAAKNQAAMNPANTVFDAKRLIGRKFDDHEVQGDIKHFPFKVVDKASKPMIQVEYKGETKTFSPEEISSMILGKMKETAEGFLGTTVKDAVVTVPAYFNDSQRQATKDAGTIAGLNVMRIINEPTAAAIAYGLDKKSEAEKNVLIFDLGGGTFDVSLLSIEDGIFEVKATAGDTHLGGEDFDNRLVNFFIQEFKRKNKKDISTNQRALRRLRTACERAKRTLSSSAQTSIEIDSLYEGIDFYTSITRARFEELCADLFRSTLEPVDKVLSDAKIDKSKVDEIVLVGGSTRIPKVQKLVSDYFNGKEPNRSINPDEAVAYGAAVQAAILSGDTSSKTQDLLLLDVAPLSLGIETAGGIMTKLIPRNSTIPTKKSETFSTYADNQPGVLIQVFEGERAQTKDNNLLGKFELSGIPPAPRGVPQIEVTFDIDANGILNVSALEKGTGKTQKITITNDKGRLSKEEIEKMVSEAEKFKEEDEKEASRVQAKNQLESYAYSLKNTLGEEQFKSKLDASEIEEVTKAADETISWLDANQTATQEEFADQQKELESKANPIMTKAYQAGATPSGAAGAAPGGFPGGAAPEPSNDGPTVEEVD</sequence>
<accession>P46587</accession>
<accession>A0A1D8PD89</accession>
<accession>Q59VM8</accession>